<comment type="function">
    <text>The 120 kDa surface-exposed protein is a major structural protein which may play a role as a rickettsial virulence factor and/or immunogen during infection.</text>
</comment>
<comment type="function">
    <text>The 32 kDa beta peptide may serve as a membrane anchor.</text>
</comment>
<comment type="subcellular location">
    <molecule>Outer membrane protein B</molecule>
    <subcellularLocation>
        <location evidence="1">Periplasm</location>
    </subcellularLocation>
</comment>
<comment type="subcellular location">
    <molecule>120 kDa surface-exposed protein</molecule>
    <subcellularLocation>
        <location>Secreted</location>
    </subcellularLocation>
    <subcellularLocation>
        <location>Cell surface</location>
    </subcellularLocation>
    <text>Surface exposed. This bacterium is covered by a S-layer with hexagonal symmetry.</text>
</comment>
<comment type="subcellular location">
    <molecule>32 kDa beta peptide</molecule>
    <subcellularLocation>
        <location evidence="4">Cell outer membrane</location>
        <topology evidence="4">Multi-pass membrane protein</topology>
    </subcellularLocation>
    <text>The cleaved C-terminal fragment (autotransporter domain) is localized in the outer membrane.</text>
</comment>
<comment type="similarity">
    <text evidence="4">Belongs to the rickettsiae OmpA/OmpB family.</text>
</comment>
<proteinExistence type="evidence at protein level"/>
<name>OMPB_RICTY</name>
<protein>
    <recommendedName>
        <fullName>Outer membrane protein B</fullName>
    </recommendedName>
    <alternativeName>
        <fullName>168 kDa surface-layer protein</fullName>
    </alternativeName>
    <alternativeName>
        <fullName>Cell surface antigen 5</fullName>
        <shortName>Sca5</shortName>
    </alternativeName>
    <alternativeName>
        <fullName>Surface protein antigen</fullName>
    </alternativeName>
    <alternativeName>
        <fullName>rOmp B</fullName>
        <shortName>rOmpB</shortName>
    </alternativeName>
    <component>
        <recommendedName>
            <fullName>120 kDa surface-exposed protein</fullName>
        </recommendedName>
        <alternativeName>
            <fullName>120 kDa outer membrane protein OmpB</fullName>
        </alternativeName>
        <alternativeName>
            <fullName>Surface protein antigen</fullName>
        </alternativeName>
        <alternativeName>
            <fullName>p120</fullName>
        </alternativeName>
    </component>
    <component>
        <recommendedName>
            <fullName>32 kDa beta peptide</fullName>
        </recommendedName>
    </component>
</protein>
<dbReference type="EMBL" id="L04661">
    <property type="protein sequence ID" value="AAB48987.1"/>
    <property type="molecule type" value="Unassigned_DNA"/>
</dbReference>
<dbReference type="EMBL" id="AE017197">
    <property type="protein sequence ID" value="AAU04158.1"/>
    <property type="molecule type" value="Genomic_DNA"/>
</dbReference>
<dbReference type="PIR" id="JN0896">
    <property type="entry name" value="JN0896"/>
</dbReference>
<dbReference type="RefSeq" id="WP_011191135.1">
    <property type="nucleotide sequence ID" value="NC_006142.1"/>
</dbReference>
<dbReference type="SMR" id="P96989"/>
<dbReference type="KEGG" id="rty:RT0699"/>
<dbReference type="eggNOG" id="COG4625">
    <property type="taxonomic scope" value="Bacteria"/>
</dbReference>
<dbReference type="HOGENOM" id="CLU_000413_0_0_5"/>
<dbReference type="OrthoDB" id="7161057at2"/>
<dbReference type="Proteomes" id="UP000000604">
    <property type="component" value="Chromosome"/>
</dbReference>
<dbReference type="GO" id="GO:0009279">
    <property type="term" value="C:cell outer membrane"/>
    <property type="evidence" value="ECO:0007669"/>
    <property type="project" value="UniProtKB-SubCell"/>
</dbReference>
<dbReference type="GO" id="GO:0009986">
    <property type="term" value="C:cell surface"/>
    <property type="evidence" value="ECO:0007669"/>
    <property type="project" value="UniProtKB-SubCell"/>
</dbReference>
<dbReference type="GO" id="GO:0005576">
    <property type="term" value="C:extracellular region"/>
    <property type="evidence" value="ECO:0007669"/>
    <property type="project" value="UniProtKB-SubCell"/>
</dbReference>
<dbReference type="GO" id="GO:0042597">
    <property type="term" value="C:periplasmic space"/>
    <property type="evidence" value="ECO:0007669"/>
    <property type="project" value="UniProtKB-SubCell"/>
</dbReference>
<dbReference type="Gene3D" id="2.40.128.130">
    <property type="entry name" value="Autotransporter beta-domain"/>
    <property type="match status" value="1"/>
</dbReference>
<dbReference type="InterPro" id="IPR005546">
    <property type="entry name" value="Autotransporte_beta"/>
</dbReference>
<dbReference type="InterPro" id="IPR036709">
    <property type="entry name" value="Autotransporte_beta_dom_sf"/>
</dbReference>
<dbReference type="InterPro" id="IPR006315">
    <property type="entry name" value="OM_autotransptr_brl_dom"/>
</dbReference>
<dbReference type="InterPro" id="IPR022095">
    <property type="entry name" value="OmpB_passenger_Rickettsia"/>
</dbReference>
<dbReference type="InterPro" id="IPR048195">
    <property type="entry name" value="OmpB_ricketsia"/>
</dbReference>
<dbReference type="NCBIfam" id="TIGR01414">
    <property type="entry name" value="autotrans_barl"/>
    <property type="match status" value="1"/>
</dbReference>
<dbReference type="NCBIfam" id="NF041657">
    <property type="entry name" value="ompB_ricketsia"/>
    <property type="match status" value="1"/>
</dbReference>
<dbReference type="Pfam" id="PF03797">
    <property type="entry name" value="Autotransporter"/>
    <property type="match status" value="1"/>
</dbReference>
<dbReference type="Pfam" id="PF12334">
    <property type="entry name" value="rOmpB_passenger"/>
    <property type="match status" value="1"/>
</dbReference>
<dbReference type="SMART" id="SM00869">
    <property type="entry name" value="Autotransporter"/>
    <property type="match status" value="1"/>
</dbReference>
<dbReference type="SUPFAM" id="SSF103515">
    <property type="entry name" value="Autotransporter"/>
    <property type="match status" value="1"/>
</dbReference>
<dbReference type="PROSITE" id="PS51208">
    <property type="entry name" value="AUTOTRANSPORTER"/>
    <property type="match status" value="1"/>
</dbReference>
<reference key="1">
    <citation type="journal article" date="1993" name="Gene">
        <title>Cloning and sequence analysis of the gene encoding the crystalline surface layer protein of Rickettsia typhi.</title>
        <authorList>
            <person name="Hahn M.-J."/>
            <person name="Kim K.-K."/>
            <person name="Kim I."/>
            <person name="Chang W.-H."/>
        </authorList>
    </citation>
    <scope>NUCLEOTIDE SEQUENCE [GENOMIC DNA]</scope>
    <source>
        <strain>ATCC VR-144 / Wilmington</strain>
    </source>
</reference>
<reference key="2">
    <citation type="journal article" date="2004" name="J. Bacteriol.">
        <title>Complete genome sequence of Rickettsia typhi and comparison with sequences of other Rickettsiae.</title>
        <authorList>
            <person name="McLeod M.P."/>
            <person name="Qin X."/>
            <person name="Karpathy S.E."/>
            <person name="Gioia J."/>
            <person name="Highlander S.K."/>
            <person name="Fox G.E."/>
            <person name="McNeill T.Z."/>
            <person name="Jiang H."/>
            <person name="Muzny D."/>
            <person name="Jacob L.S."/>
            <person name="Hawes A.C."/>
            <person name="Sodergren E."/>
            <person name="Gill R."/>
            <person name="Hume J."/>
            <person name="Morgan M."/>
            <person name="Fan G."/>
            <person name="Amin A.G."/>
            <person name="Gibbs R.A."/>
            <person name="Hong C."/>
            <person name="Yu X.-J."/>
            <person name="Walker D.H."/>
            <person name="Weinstock G.M."/>
        </authorList>
    </citation>
    <scope>NUCLEOTIDE SEQUENCE [LARGE SCALE GENOMIC DNA]</scope>
    <source>
        <strain>ATCC VR-144 / Wilmington</strain>
    </source>
</reference>
<reference key="3">
    <citation type="journal article" date="1992" name="Mol. Immunol.">
        <title>Mapping of monoclonal antibody binding sites on CNBr fragments of the S-layer protein antigens of Rickettsia typhi and Rickettsia prowazekii.</title>
        <authorList>
            <person name="Ching W.M."/>
            <person name="Carl M."/>
            <person name="Dasch G.A."/>
        </authorList>
    </citation>
    <scope>PARTIAL PROTEIN SEQUENCE</scope>
    <source>
        <strain>ATCC VR-144 / Wilmington</strain>
    </source>
</reference>
<reference key="4">
    <citation type="journal article" date="1992" name="Infect. Immun.">
        <title>Evidence for proteolytic cleavage of the 120-kilodalton outer membrane protein of rickettsiae: identification of an avirulent mutant deficient in processing.</title>
        <authorList>
            <person name="Hackstadt T."/>
            <person name="Messer R."/>
            <person name="Cieplak W. Jr."/>
            <person name="Peacock M.G."/>
        </authorList>
    </citation>
    <scope>PROTEIN SEQUENCE OF 1353-1371</scope>
    <scope>IDENTIFICATION OF CLEAVAGE SITE</scope>
    <source>
        <strain>ATCC VR-144 / Wilmington</strain>
    </source>
</reference>
<evidence type="ECO:0000250" key="1"/>
<evidence type="ECO:0000255" key="2"/>
<evidence type="ECO:0000255" key="3">
    <source>
        <dbReference type="PROSITE-ProRule" id="PRU00556"/>
    </source>
</evidence>
<evidence type="ECO:0000305" key="4"/>
<gene>
    <name type="primary">ompB</name>
    <name type="synonym">slp</name>
    <name type="ordered locus">RT0699</name>
</gene>
<sequence length="1645" mass="169698">MAQKPNFLKKIISAGLVTASTATIVAGFSGVAMGAVMQYNRTTNAAATTVDGAGFDQTGAGVNLPVATNSVITANSNNAITFNTPNGNLNSLFLDTANTLAVTINENTTLGFVTNVTKQGNFFNFTIGAGKSLTITGHGITAQQAATTKSAQNVVSKVNAGAAINDNDLSGVGSIDFTAAPSVLEFNLINPTTQEAPLTLGDNAKIVNGANGILNITNGFVKVSDKTFAGIKTINIGDNQGLMFNTTPDAANALNLQGGGNTINFNGRDGTGKLVLVSKNGNATEFNVTGSLGGNLKGVIEFDTTAAAGKLIANGGAANAVIGTDNGAGRAAGFIVSVDNGNAATISGQVYAKDIVIQSANAGGQVTFEHLVDVGLGGKTNFKTADSKVIITENASFGSTDFGNLAVQIVVPNNKILTGNFIGDAKNNGNTAGVITFNANGTLVSGNTDPNIVVTNIKAIEVEGAGIVQLSGIHGAELRLGNAGSIFKLADGTVINGPVNQNPLVNNNALAAGSIQLDGSAIITGDIGNGAVNAALQDITLANDASKILTLSGANIIGANAGGAIHFQANGGTIQLTSTQNNILVDFDLDVTTDQTGVVDASSLTNNQTLTINGSIGTIGANTKTLGRFNVGSSKTILNAGDVAINELVMENDGSVHLTHNTYLITKTINAANQGKIIVAADPINTDTALADGTNLGSAESPLSNIHFATKAANGDSILHIGKGVNLYANNITTTDANVGSLHFRSGGTSIVSGTVGGQQGLKLNNLILDNGTTVKFLGDITFNGGTKIEGKSILQISSNYITDHIESADNTGTLEFVNTDPITVTLNKQGAYFGVLKQVMVSGPGNIAFNEIGNGVAHAIAVDSISFENASLGASLFLLSGTPLDVLTIKSTVGNGTVDNFNAPILVVSGIDSMINNGQVIGDQKNIIALSLGSDNSITVNSNTLYAGIRTTKTNQGTVTLSGGIPNNPGTIYGLGLENGDPKLKQVTFTTDYNNLGSIIATNVTINDDVTLTTGGIAGTDFDGKITLGSINGNANVKFVDRTFSHPTSMIVSTKANQGTVTYLGNALVGNIGSSDIPVASVRFTGNDSGVGLQGNIHSQNIDFGTYNLTILNSDVILGGGTTAINGEIDLLTNNLIFANGTSTWGNNTSLSTTLNVSNGNVGQIVIAEGAQVNATTTGTTTIKIQDNANANFSGTQTYTLIQGGARFNGTLGAPNFDVTGNNIFVKYELIRDANQDYVLTRTNDVLNVVTTAVGNSAIANAPGVHQNIAICLESTDTAAYNNMLLAKDSSDVATFIGAIATDTGAAVATVNLNDTQKTQDLLGNRLGALRYLSNSETADVGGSETGAVSSGDEAIDQVSYGVWAKPFYNIAEQDKKGGLAGYKAKTAGVVVGLDTLANDNLMIGAAIGITKTDIKHQDYKKGDKTDIKGLSFSLYGAQQLVKNFFAQGSAIFTLNKVKSKSQRYFFDANGKMNKQIAAGNYDNITFGGNLMFGYDYNALQGVLVTPMAGLSYLKSSNENYKETGTTVANKRIHSKFSDRIDLIVGAKVTGSAMNINDIVIYPEIHSFVVHKVNGKLSKAQSMLDGQTAPFISQPDRTAKTSYNIGLSANIRSDAKMEYGIGYDFNAASKYTAHQGTLKVRINF</sequence>
<keyword id="KW-0998">Cell outer membrane</keyword>
<keyword id="KW-0903">Direct protein sequencing</keyword>
<keyword id="KW-0472">Membrane</keyword>
<keyword id="KW-0574">Periplasm</keyword>
<keyword id="KW-0964">Secreted</keyword>
<keyword id="KW-0812">Transmembrane</keyword>
<keyword id="KW-1134">Transmembrane beta strand</keyword>
<keyword id="KW-0843">Virulence</keyword>
<feature type="chain" id="PRO_0000387583" description="Outer membrane protein B">
    <location>
        <begin position="1"/>
        <end position="1645"/>
    </location>
</feature>
<feature type="chain" id="PRO_0000032660" description="120 kDa surface-exposed protein">
    <location>
        <begin position="1"/>
        <end position="1328"/>
    </location>
</feature>
<feature type="propeptide" id="PRO_0000032661" evidence="2">
    <location>
        <begin position="1329"/>
        <end position="1352"/>
    </location>
</feature>
<feature type="chain" id="PRO_0000032662" description="32 kDa beta peptide">
    <location>
        <begin position="1353"/>
        <end position="1645"/>
    </location>
</feature>
<feature type="domain" description="Autotransporter" evidence="3">
    <location>
        <begin position="1357"/>
        <end position="1645"/>
    </location>
</feature>
<feature type="sequence conflict" description="In Ref. 3; AA sequence." evidence="4" ref="3">
    <original>H</original>
    <variation>N</variation>
    <location>
        <position position="657"/>
    </location>
</feature>
<feature type="sequence conflict" description="In Ref. 3; AA sequence." evidence="4" ref="3">
    <original>V</original>
    <variation>I</variation>
    <location>
        <position position="842"/>
    </location>
</feature>
<feature type="sequence conflict" description="In Ref. 3; AA sequence." evidence="4" ref="3">
    <original>G</original>
    <variation>A</variation>
    <location>
        <position position="1071"/>
    </location>
</feature>
<feature type="sequence conflict" description="In Ref. 3; AA sequence." evidence="4" ref="3">
    <original>G</original>
    <variation>S</variation>
    <location>
        <position position="1306"/>
    </location>
</feature>
<accession>P96989</accession>
<organism>
    <name type="scientific">Rickettsia typhi (strain ATCC VR-144 / Wilmington)</name>
    <dbReference type="NCBI Taxonomy" id="257363"/>
    <lineage>
        <taxon>Bacteria</taxon>
        <taxon>Pseudomonadati</taxon>
        <taxon>Pseudomonadota</taxon>
        <taxon>Alphaproteobacteria</taxon>
        <taxon>Rickettsiales</taxon>
        <taxon>Rickettsiaceae</taxon>
        <taxon>Rickettsieae</taxon>
        <taxon>Rickettsia</taxon>
        <taxon>typhus group</taxon>
    </lineage>
</organism>